<organism>
    <name type="scientific">Saccharomyces cerevisiae (strain ATCC 204508 / S288c)</name>
    <name type="common">Baker's yeast</name>
    <dbReference type="NCBI Taxonomy" id="559292"/>
    <lineage>
        <taxon>Eukaryota</taxon>
        <taxon>Fungi</taxon>
        <taxon>Dikarya</taxon>
        <taxon>Ascomycota</taxon>
        <taxon>Saccharomycotina</taxon>
        <taxon>Saccharomycetes</taxon>
        <taxon>Saccharomycetales</taxon>
        <taxon>Saccharomycetaceae</taxon>
        <taxon>Saccharomyces</taxon>
    </lineage>
</organism>
<comment type="function">
    <text evidence="3 4 5 8 9 10">One of five 2-oxo acid decarboxylases (PDC1, PDC5, PDC6, ARO10, and THI3) involved in amino acid catabolism. The enzyme catalyzes the decarboxylation of amino acids, which, in a first step, have been transaminated to the corresponding 2-oxo acids (alpha-keto-acids). In a third step, the resulting aldehydes are reduced to alcohols, collectively referred to as fusel oils or alcohols. Its preferred substrates are the transaminated amino acids derived from leucine (4-methyl-2-oxopentanoate, also alpha-keto-isocaproate) and isoleucine ((3S)-3-methyl-2-oxopentanoate, also alpha-keto-beta-methylvalerate), whereas transaminated valine, transaminated aromatic amino acids, and pyruvate are no substrates. In analogy to the pyruvate decarboxylases the enzyme may in a side-reaction catalyze condensation (or carboligation) reactions leading to the formation of 2-hydroxy ketone, collectively called acyloins. The enzyme is also positively regulating the thiamine metabolism by a molecular mechanism that may involve thiamine concentration sensing and signal transmission.</text>
</comment>
<comment type="catalytic activity">
    <reaction evidence="9">
        <text>4-methyl-2-oxopentanoate + H(+) = 3-methylbutanal + CO2</text>
        <dbReference type="Rhea" id="RHEA:54360"/>
        <dbReference type="ChEBI" id="CHEBI:15378"/>
        <dbReference type="ChEBI" id="CHEBI:16526"/>
        <dbReference type="ChEBI" id="CHEBI:16638"/>
        <dbReference type="ChEBI" id="CHEBI:17865"/>
        <dbReference type="EC" id="4.1.1.72"/>
    </reaction>
</comment>
<comment type="catalytic activity">
    <reaction evidence="3">
        <text>(S)-3-methyl-2-oxopentanoate + H(+) = 2-methylbutanal + CO2</text>
        <dbReference type="Rhea" id="RHEA:21108"/>
        <dbReference type="ChEBI" id="CHEBI:15378"/>
        <dbReference type="ChEBI" id="CHEBI:16182"/>
        <dbReference type="ChEBI" id="CHEBI:16526"/>
        <dbReference type="ChEBI" id="CHEBI:35146"/>
        <dbReference type="EC" id="4.1.1.72"/>
    </reaction>
</comment>
<comment type="cofactor">
    <cofactor evidence="1">
        <name>Mg(2+)</name>
        <dbReference type="ChEBI" id="CHEBI:18420"/>
    </cofactor>
    <text evidence="1">Binds 1 Mg(2+) per subunit.</text>
</comment>
<comment type="cofactor">
    <cofactor evidence="1">
        <name>thiamine diphosphate</name>
        <dbReference type="ChEBI" id="CHEBI:58937"/>
    </cofactor>
    <text evidence="1">Binds 1 thiamine pyrophosphate per subunit.</text>
</comment>
<comment type="pathway">
    <text>Amino-acid degradation; Ehrlich pathway.</text>
</comment>
<comment type="interaction">
    <interactant intactId="EBI-19209">
        <id>Q07471</id>
    </interactant>
    <interactant intactId="EBI-13004">
        <id>P32896</id>
        <label>PDC2</label>
    </interactant>
    <organismsDiffer>false</organismsDiffer>
    <experiments>3</experiments>
</comment>
<comment type="subcellular location">
    <subcellularLocation>
        <location evidence="6">Nucleus</location>
    </subcellularLocation>
</comment>
<comment type="biotechnology">
    <text>Fusel oils are important flavor and aroma compounds in yeast-fermented products contributing to the quality of beverages and food. In low concentration they are generally desirable, whereas high concentrations may spoil the product. By adjusting growth conditions and substrate their production is sought to be influenced.</text>
</comment>
<comment type="miscellaneous">
    <text evidence="7">Present with 2140 molecules/cell in log phase SD medium.</text>
</comment>
<comment type="similarity">
    <text evidence="11">Belongs to the TPP enzyme family.</text>
</comment>
<comment type="caution">
    <text evidence="12 13 14">While genetic evidence suggests this enzyme is involved in leucine and isoleucine catabolism (PubMed:9341119, PubMed:10753893), no decarboxylase enzymatic activity could be detected in cell extracts of S.cerevisiae strains expressing the individual gene (PubMed:22904058).</text>
</comment>
<comment type="sequence caution" evidence="11">
    <conflict type="erroneous initiation">
        <sequence resource="EMBL-CDS" id="BAA04886"/>
    </conflict>
    <text>Truncated N-terminus.</text>
</comment>
<reference key="1">
    <citation type="submission" date="1997-01" db="EMBL/GenBank/DDBJ databases">
        <title>Sequencing and expression of THI3 gene coding a positive regulatory factor with thiamin pyrophosphate-binding motif for thiamin metabolism in Saccharomyces cerevisiae.</title>
        <authorList>
            <person name="Nishimura H."/>
            <person name="Nosaka K."/>
            <person name="Kaneko Y."/>
            <person name="Watanabe K."/>
            <person name="Iwashima A."/>
        </authorList>
    </citation>
    <scope>NUCLEOTIDE SEQUENCE [GENOMIC DNA]</scope>
    <source>
        <strain>S288c / GRF88</strain>
    </source>
</reference>
<reference key="2">
    <citation type="journal article" date="1997" name="Nature">
        <title>The nucleotide sequence of Saccharomyces cerevisiae chromosome IV.</title>
        <authorList>
            <person name="Jacq C."/>
            <person name="Alt-Moerbe J."/>
            <person name="Andre B."/>
            <person name="Arnold W."/>
            <person name="Bahr A."/>
            <person name="Ballesta J.P.G."/>
            <person name="Bargues M."/>
            <person name="Baron L."/>
            <person name="Becker A."/>
            <person name="Biteau N."/>
            <person name="Bloecker H."/>
            <person name="Blugeon C."/>
            <person name="Boskovic J."/>
            <person name="Brandt P."/>
            <person name="Brueckner M."/>
            <person name="Buitrago M.J."/>
            <person name="Coster F."/>
            <person name="Delaveau T."/>
            <person name="del Rey F."/>
            <person name="Dujon B."/>
            <person name="Eide L.G."/>
            <person name="Garcia-Cantalejo J.M."/>
            <person name="Goffeau A."/>
            <person name="Gomez-Peris A."/>
            <person name="Granotier C."/>
            <person name="Hanemann V."/>
            <person name="Hankeln T."/>
            <person name="Hoheisel J.D."/>
            <person name="Jaeger W."/>
            <person name="Jimenez A."/>
            <person name="Jonniaux J.-L."/>
            <person name="Kraemer C."/>
            <person name="Kuester H."/>
            <person name="Laamanen P."/>
            <person name="Legros Y."/>
            <person name="Louis E.J."/>
            <person name="Moeller-Rieker S."/>
            <person name="Monnet A."/>
            <person name="Moro M."/>
            <person name="Mueller-Auer S."/>
            <person name="Nussbaumer B."/>
            <person name="Paricio N."/>
            <person name="Paulin L."/>
            <person name="Perea J."/>
            <person name="Perez-Alonso M."/>
            <person name="Perez-Ortin J.E."/>
            <person name="Pohl T.M."/>
            <person name="Prydz H."/>
            <person name="Purnelle B."/>
            <person name="Rasmussen S.W."/>
            <person name="Remacha M.A."/>
            <person name="Revuelta J.L."/>
            <person name="Rieger M."/>
            <person name="Salom D."/>
            <person name="Saluz H.P."/>
            <person name="Saiz J.E."/>
            <person name="Saren A.-M."/>
            <person name="Schaefer M."/>
            <person name="Scharfe M."/>
            <person name="Schmidt E.R."/>
            <person name="Schneider C."/>
            <person name="Scholler P."/>
            <person name="Schwarz S."/>
            <person name="Soler-Mira A."/>
            <person name="Urrestarazu L.A."/>
            <person name="Verhasselt P."/>
            <person name="Vissers S."/>
            <person name="Voet M."/>
            <person name="Volckaert G."/>
            <person name="Wagner G."/>
            <person name="Wambutt R."/>
            <person name="Wedler E."/>
            <person name="Wedler H."/>
            <person name="Woelfl S."/>
            <person name="Harris D.E."/>
            <person name="Bowman S."/>
            <person name="Brown D."/>
            <person name="Churcher C.M."/>
            <person name="Connor R."/>
            <person name="Dedman K."/>
            <person name="Gentles S."/>
            <person name="Hamlin N."/>
            <person name="Hunt S."/>
            <person name="Jones L."/>
            <person name="McDonald S."/>
            <person name="Murphy L.D."/>
            <person name="Niblett D."/>
            <person name="Odell C."/>
            <person name="Oliver K."/>
            <person name="Rajandream M.A."/>
            <person name="Richards C."/>
            <person name="Shore L."/>
            <person name="Walsh S.V."/>
            <person name="Barrell B.G."/>
            <person name="Dietrich F.S."/>
            <person name="Mulligan J.T."/>
            <person name="Allen E."/>
            <person name="Araujo R."/>
            <person name="Aviles E."/>
            <person name="Berno A."/>
            <person name="Carpenter J."/>
            <person name="Chen E."/>
            <person name="Cherry J.M."/>
            <person name="Chung E."/>
            <person name="Duncan M."/>
            <person name="Hunicke-Smith S."/>
            <person name="Hyman R.W."/>
            <person name="Komp C."/>
            <person name="Lashkari D."/>
            <person name="Lew H."/>
            <person name="Lin D."/>
            <person name="Mosedale D."/>
            <person name="Nakahara K."/>
            <person name="Namath A."/>
            <person name="Oefner P."/>
            <person name="Oh C."/>
            <person name="Petel F.X."/>
            <person name="Roberts D."/>
            <person name="Schramm S."/>
            <person name="Schroeder M."/>
            <person name="Shogren T."/>
            <person name="Shroff N."/>
            <person name="Winant A."/>
            <person name="Yelton M.A."/>
            <person name="Botstein D."/>
            <person name="Davis R.W."/>
            <person name="Johnston M."/>
            <person name="Andrews S."/>
            <person name="Brinkman R."/>
            <person name="Cooper J."/>
            <person name="Ding H."/>
            <person name="Du Z."/>
            <person name="Favello A."/>
            <person name="Fulton L."/>
            <person name="Gattung S."/>
            <person name="Greco T."/>
            <person name="Hallsworth K."/>
            <person name="Hawkins J."/>
            <person name="Hillier L.W."/>
            <person name="Jier M."/>
            <person name="Johnson D."/>
            <person name="Johnston L."/>
            <person name="Kirsten J."/>
            <person name="Kucaba T."/>
            <person name="Langston Y."/>
            <person name="Latreille P."/>
            <person name="Le T."/>
            <person name="Mardis E."/>
            <person name="Menezes S."/>
            <person name="Miller N."/>
            <person name="Nhan M."/>
            <person name="Pauley A."/>
            <person name="Peluso D."/>
            <person name="Rifkin L."/>
            <person name="Riles L."/>
            <person name="Taich A."/>
            <person name="Trevaskis E."/>
            <person name="Vignati D."/>
            <person name="Wilcox L."/>
            <person name="Wohldman P."/>
            <person name="Vaudin M."/>
            <person name="Wilson R."/>
            <person name="Waterston R."/>
            <person name="Albermann K."/>
            <person name="Hani J."/>
            <person name="Heumann K."/>
            <person name="Kleine K."/>
            <person name="Mewes H.-W."/>
            <person name="Zollner A."/>
            <person name="Zaccaria P."/>
        </authorList>
    </citation>
    <scope>NUCLEOTIDE SEQUENCE [LARGE SCALE GENOMIC DNA]</scope>
    <source>
        <strain>ATCC 204508 / S288c</strain>
    </source>
</reference>
<reference key="3">
    <citation type="journal article" date="2014" name="G3 (Bethesda)">
        <title>The reference genome sequence of Saccharomyces cerevisiae: Then and now.</title>
        <authorList>
            <person name="Engel S.R."/>
            <person name="Dietrich F.S."/>
            <person name="Fisk D.G."/>
            <person name="Binkley G."/>
            <person name="Balakrishnan R."/>
            <person name="Costanzo M.C."/>
            <person name="Dwight S.S."/>
            <person name="Hitz B.C."/>
            <person name="Karra K."/>
            <person name="Nash R.S."/>
            <person name="Weng S."/>
            <person name="Wong E.D."/>
            <person name="Lloyd P."/>
            <person name="Skrzypek M.S."/>
            <person name="Miyasato S.R."/>
            <person name="Simison M."/>
            <person name="Cherry J.M."/>
        </authorList>
    </citation>
    <scope>GENOME REANNOTATION</scope>
    <source>
        <strain>ATCC 204508 / S288c</strain>
    </source>
</reference>
<reference key="4">
    <citation type="journal article" date="1992" name="J. Bacteriol.">
        <title>A positive regulatory gene, THI3, is required for thiamine metabolism in Saccharomyces cerevisiae.</title>
        <authorList>
            <person name="Nishimura H."/>
            <person name="Kawasaki Y."/>
            <person name="Kaneko Y."/>
            <person name="Nosaka K."/>
            <person name="Iwashima A."/>
        </authorList>
    </citation>
    <scope>FUNCTION</scope>
    <scope>REGULATION OF THIAMINE METABOLISM</scope>
</reference>
<reference key="5">
    <citation type="journal article" date="1997" name="J. Biol. Chem.">
        <title>A 13C nuclear magnetic resonance investigation of the metabolism of leucine to isoamyl alcohol in Saccharomyces cerevisiae.</title>
        <authorList>
            <person name="Dickinson J.R."/>
            <person name="Lanterman M.M."/>
            <person name="Danner D.J."/>
            <person name="Pearson B.M."/>
            <person name="Sanz P."/>
            <person name="Harrison S.J."/>
            <person name="Hewlins M.J."/>
        </authorList>
    </citation>
    <scope>ROLE IN LEUCINE CATABOLISM</scope>
</reference>
<reference key="6">
    <citation type="journal article" date="1998" name="J. Biol. Chem.">
        <title>An investigation of the metabolism of valine to isobutyl alcohol in Saccharomyces cerevisiae.</title>
        <authorList>
            <person name="Dickinson J.R."/>
            <person name="Harrison S.J."/>
            <person name="Hewlins M.J."/>
        </authorList>
    </citation>
    <scope>ROLE IN VALINE CATABOLISM</scope>
</reference>
<reference key="7">
    <citation type="journal article" date="2000" name="J. Biol. Chem.">
        <title>An investigation of the metabolism of isoleucine to active Amyl alcohol in Saccharomyces cerevisiae.</title>
        <authorList>
            <person name="Dickinson J.R."/>
            <person name="Harrison S.J."/>
            <person name="Dickinson J.A."/>
            <person name="Hewlins M.J."/>
        </authorList>
    </citation>
    <scope>ROLE IN ISOLEUCINE CATABOLISM</scope>
</reference>
<reference key="8">
    <citation type="journal article" date="2003" name="J. Biol. Chem.">
        <title>The catabolism of amino acids to long chain and complex alcohols in Saccharomyces cerevisiae.</title>
        <authorList>
            <person name="Dickinson J.R."/>
            <person name="Salgado L.E."/>
            <person name="Hewlins M.J."/>
        </authorList>
    </citation>
    <scope>ROLE IN PHENYLALANINE; TRYPTOPHAN AND LEUCINE CATABOLISM</scope>
</reference>
<reference key="9">
    <citation type="journal article" date="2003" name="Appl. Environ. Microbiol.">
        <title>Identification and characterization of phenylpyruvate decarboxylase genes in Saccharomyces cerevisiae.</title>
        <authorList>
            <person name="Vuralhan Z."/>
            <person name="Morais M.A."/>
            <person name="Tai S.L."/>
            <person name="Piper M.D."/>
            <person name="Pronk J.T."/>
        </authorList>
    </citation>
    <scope>FUNCTION</scope>
    <scope>AROMATIC AMINO ACIDS AS NITROGEN SOURCE</scope>
</reference>
<reference key="10">
    <citation type="journal article" date="2003" name="Nature">
        <title>Global analysis of protein localization in budding yeast.</title>
        <authorList>
            <person name="Huh W.-K."/>
            <person name="Falvo J.V."/>
            <person name="Gerke L.C."/>
            <person name="Carroll A.S."/>
            <person name="Howson R.W."/>
            <person name="Weissman J.S."/>
            <person name="O'Shea E.K."/>
        </authorList>
    </citation>
    <scope>SUBCELLULAR LOCATION [LARGE SCALE ANALYSIS]</scope>
</reference>
<reference key="11">
    <citation type="journal article" date="2003" name="Nature">
        <title>Global analysis of protein expression in yeast.</title>
        <authorList>
            <person name="Ghaemmaghami S."/>
            <person name="Huh W.-K."/>
            <person name="Bower K."/>
            <person name="Howson R.W."/>
            <person name="Belle A."/>
            <person name="Dephoure N."/>
            <person name="O'Shea E.K."/>
            <person name="Weissman J.S."/>
        </authorList>
    </citation>
    <scope>LEVEL OF PROTEIN EXPRESSION [LARGE SCALE ANALYSIS]</scope>
</reference>
<reference key="12">
    <citation type="journal article" date="2012" name="Appl. Environ. Microbiol.">
        <title>Substrate specificity of thiamine pyrophosphate-dependent 2-oxo-acid decarboxylases in Saccharomyces cerevisiae.</title>
        <authorList>
            <person name="Romagnoli G."/>
            <person name="Luttik M.A."/>
            <person name="Koetter P."/>
            <person name="Pronk J.T."/>
            <person name="Daran J.M."/>
        </authorList>
    </citation>
    <scope>LACK OF DECARBOXYLATION ACTIVITY</scope>
</reference>
<feature type="chain" id="PRO_0000090836" description="Thiamine metabolism regulatory protein THI3">
    <location>
        <begin position="1"/>
        <end position="609"/>
    </location>
</feature>
<feature type="region of interest" description="Disordered" evidence="2">
    <location>
        <begin position="578"/>
        <end position="598"/>
    </location>
</feature>
<name>THI3_YEAST</name>
<evidence type="ECO:0000250" key="1"/>
<evidence type="ECO:0000256" key="2">
    <source>
        <dbReference type="SAM" id="MobiDB-lite"/>
    </source>
</evidence>
<evidence type="ECO:0000269" key="3">
    <source>
    </source>
</evidence>
<evidence type="ECO:0000269" key="4">
    <source>
    </source>
</evidence>
<evidence type="ECO:0000269" key="5">
    <source>
    </source>
</evidence>
<evidence type="ECO:0000269" key="6">
    <source>
    </source>
</evidence>
<evidence type="ECO:0000269" key="7">
    <source>
    </source>
</evidence>
<evidence type="ECO:0000269" key="8">
    <source>
    </source>
</evidence>
<evidence type="ECO:0000269" key="9">
    <source>
    </source>
</evidence>
<evidence type="ECO:0000269" key="10">
    <source>
    </source>
</evidence>
<evidence type="ECO:0000305" key="11"/>
<evidence type="ECO:0000305" key="12">
    <source>
    </source>
</evidence>
<evidence type="ECO:0000305" key="13">
    <source>
    </source>
</evidence>
<evidence type="ECO:0000305" key="14">
    <source>
    </source>
</evidence>
<accession>Q07471</accession>
<accession>D6VRR9</accession>
<accession>P89098</accession>
<sequence length="609" mass="68366">MNSSYTQRYALPKCIAISDYLFHRLNQLNIHTIFGLSGEFSMPLLDKLYNIPNLRWAGNSNELNAAYAADGYSRLKGLGCLITTFGVGELSAINGVAGSYAEHVGILHIVGMPPTSAQTKQLLLHHTLGNGDFTVFHRIASDVACYTTLIIDSELCADEVDKCIKKAWIEQRPVYMGMPVNQVNLPIESARLNTPLDLQLHKNDPDVEKEVISRILSFIYKSQNPAIIVDACTSRQNLIEETKELCNRLKFPVFVTPMGKGTVNETDPQFGGVFTGSISAPEVREVVDFADFIIVIGCMLSEFSTSTFHFQYKTKNCALLYSTSVKLKNATYPDLSIKLLLQKILANLDESKLSYQPSEQPSMMVPRPYPAGNVLLRQEWVWNEISHWFQPGDIIITETGASAFGVNQTRFPVNTLGISQALWGSVGYTMGACLGAEFAVQEINKDKFPATKHRVILFMGDGAFQLTVQELSTIVKWGLTPYIFVMNNQGYSVDRFLHHRSDASYYDIQPWNYLGLLRVFGCTNYETKKIITVGEFRSMISDPNFATNDKIRMIEIMLPPRDVPQALLDRWVVEKEQSKQVQEENENSSAVNTPTPEFQPLLKKNQVGY</sequence>
<protein>
    <recommendedName>
        <fullName>Thiamine metabolism regulatory protein THI3</fullName>
        <ecNumber evidence="3 9">4.1.1.72</ecNumber>
    </recommendedName>
    <alternativeName>
        <fullName>Keto isocaproate decarboxylase 1</fullName>
    </alternativeName>
    <alternativeName>
        <fullName>Thiamine pyrophosphate-dependent 2-oxo-acid decarboxylase</fullName>
        <shortName>2ODC</shortName>
    </alternativeName>
</protein>
<proteinExistence type="evidence at protein level"/>
<keyword id="KW-0101">Branched-chain amino acid catabolism</keyword>
<keyword id="KW-0210">Decarboxylase</keyword>
<keyword id="KW-0456">Lyase</keyword>
<keyword id="KW-0460">Magnesium</keyword>
<keyword id="KW-0479">Metal-binding</keyword>
<keyword id="KW-0539">Nucleus</keyword>
<keyword id="KW-1185">Reference proteome</keyword>
<keyword id="KW-0786">Thiamine pyrophosphate</keyword>
<gene>
    <name type="primary">THI3</name>
    <name type="synonym">KID1</name>
    <name type="ordered locus">YDL080C</name>
</gene>
<dbReference type="EC" id="4.1.1.72" evidence="3 9"/>
<dbReference type="EMBL" id="D21880">
    <property type="protein sequence ID" value="BAA04886.1"/>
    <property type="status" value="ALT_INIT"/>
    <property type="molecule type" value="Genomic_DNA"/>
</dbReference>
<dbReference type="EMBL" id="Z74128">
    <property type="protein sequence ID" value="CAA98646.1"/>
    <property type="molecule type" value="Genomic_DNA"/>
</dbReference>
<dbReference type="EMBL" id="BK006938">
    <property type="protein sequence ID" value="DAA11779.1"/>
    <property type="molecule type" value="Genomic_DNA"/>
</dbReference>
<dbReference type="PIR" id="S67616">
    <property type="entry name" value="S67616"/>
</dbReference>
<dbReference type="RefSeq" id="NP_010203.1">
    <property type="nucleotide sequence ID" value="NM_001180139.1"/>
</dbReference>
<dbReference type="SMR" id="Q07471"/>
<dbReference type="BioGRID" id="31981">
    <property type="interactions" value="113"/>
</dbReference>
<dbReference type="DIP" id="DIP-6304N"/>
<dbReference type="FunCoup" id="Q07471">
    <property type="interactions" value="433"/>
</dbReference>
<dbReference type="IntAct" id="Q07471">
    <property type="interactions" value="15"/>
</dbReference>
<dbReference type="MINT" id="Q07471"/>
<dbReference type="STRING" id="4932.YDL080C"/>
<dbReference type="iPTMnet" id="Q07471"/>
<dbReference type="PaxDb" id="4932-YDL080C"/>
<dbReference type="PeptideAtlas" id="Q07471"/>
<dbReference type="EnsemblFungi" id="YDL080C_mRNA">
    <property type="protein sequence ID" value="YDL080C"/>
    <property type="gene ID" value="YDL080C"/>
</dbReference>
<dbReference type="GeneID" id="851479"/>
<dbReference type="KEGG" id="sce:YDL080C"/>
<dbReference type="AGR" id="SGD:S000002238"/>
<dbReference type="SGD" id="S000002238">
    <property type="gene designation" value="THI3"/>
</dbReference>
<dbReference type="VEuPathDB" id="FungiDB:YDL080C"/>
<dbReference type="eggNOG" id="KOG1184">
    <property type="taxonomic scope" value="Eukaryota"/>
</dbReference>
<dbReference type="GeneTree" id="ENSGT00940000176336"/>
<dbReference type="HOGENOM" id="CLU_013748_0_2_1"/>
<dbReference type="InParanoid" id="Q07471"/>
<dbReference type="OMA" id="LRQEWVW"/>
<dbReference type="OrthoDB" id="3970464at2759"/>
<dbReference type="BioCyc" id="MetaCyc:MONOMER3O-409"/>
<dbReference type="BioCyc" id="YEAST:MONOMER3O-409"/>
<dbReference type="BRENDA" id="4.1.1.72">
    <property type="organism ID" value="984"/>
</dbReference>
<dbReference type="UniPathway" id="UPA00866"/>
<dbReference type="BioGRID-ORCS" id="851479">
    <property type="hits" value="7 hits in 10 CRISPR screens"/>
</dbReference>
<dbReference type="PRO" id="PR:Q07471"/>
<dbReference type="Proteomes" id="UP000002311">
    <property type="component" value="Chromosome IV"/>
</dbReference>
<dbReference type="RNAct" id="Q07471">
    <property type="molecule type" value="protein"/>
</dbReference>
<dbReference type="GO" id="GO:0005829">
    <property type="term" value="C:cytosol"/>
    <property type="evidence" value="ECO:0000318"/>
    <property type="project" value="GO_Central"/>
</dbReference>
<dbReference type="GO" id="GO:0005634">
    <property type="term" value="C:nucleus"/>
    <property type="evidence" value="ECO:0000314"/>
    <property type="project" value="SGD"/>
</dbReference>
<dbReference type="GO" id="GO:0047433">
    <property type="term" value="F:branched-chain-2-oxoacid decarboxylase activity"/>
    <property type="evidence" value="ECO:0007669"/>
    <property type="project" value="UniProtKB-EC"/>
</dbReference>
<dbReference type="GO" id="GO:0000287">
    <property type="term" value="F:magnesium ion binding"/>
    <property type="evidence" value="ECO:0007669"/>
    <property type="project" value="InterPro"/>
</dbReference>
<dbReference type="GO" id="GO:0061629">
    <property type="term" value="F:RNA polymerase II-specific DNA-binding transcription factor binding"/>
    <property type="evidence" value="ECO:0000353"/>
    <property type="project" value="SGD"/>
</dbReference>
<dbReference type="GO" id="GO:0030976">
    <property type="term" value="F:thiamine pyrophosphate binding"/>
    <property type="evidence" value="ECO:0007669"/>
    <property type="project" value="InterPro"/>
</dbReference>
<dbReference type="GO" id="GO:0000955">
    <property type="term" value="P:amino acid catabolic process via Ehrlich pathway"/>
    <property type="evidence" value="ECO:0007669"/>
    <property type="project" value="UniProtKB-UniPathway"/>
</dbReference>
<dbReference type="GO" id="GO:0009083">
    <property type="term" value="P:branched-chain amino acid catabolic process"/>
    <property type="evidence" value="ECO:0007669"/>
    <property type="project" value="UniProtKB-KW"/>
</dbReference>
<dbReference type="GO" id="GO:0090180">
    <property type="term" value="P:positive regulation of thiamine biosynthetic process"/>
    <property type="evidence" value="ECO:0000315"/>
    <property type="project" value="SGD"/>
</dbReference>
<dbReference type="GO" id="GO:0045944">
    <property type="term" value="P:positive regulation of transcription by RNA polymerase II"/>
    <property type="evidence" value="ECO:0000315"/>
    <property type="project" value="SGD"/>
</dbReference>
<dbReference type="CDD" id="cd02005">
    <property type="entry name" value="TPP_PDC_IPDC"/>
    <property type="match status" value="1"/>
</dbReference>
<dbReference type="CDD" id="cd07038">
    <property type="entry name" value="TPP_PYR_PDC_IPDC_like"/>
    <property type="match status" value="1"/>
</dbReference>
<dbReference type="FunFam" id="3.40.50.970:FF:000019">
    <property type="entry name" value="Pyruvate decarboxylase isozyme"/>
    <property type="match status" value="1"/>
</dbReference>
<dbReference type="FunFam" id="3.40.50.1220:FF:000055">
    <property type="entry name" value="Thi3p"/>
    <property type="match status" value="1"/>
</dbReference>
<dbReference type="FunFam" id="3.40.50.970:FF:000087">
    <property type="entry name" value="Thi3p"/>
    <property type="match status" value="1"/>
</dbReference>
<dbReference type="Gene3D" id="3.40.50.970">
    <property type="match status" value="2"/>
</dbReference>
<dbReference type="Gene3D" id="3.40.50.1220">
    <property type="entry name" value="TPP-binding domain"/>
    <property type="match status" value="1"/>
</dbReference>
<dbReference type="InterPro" id="IPR029035">
    <property type="entry name" value="DHS-like_NAD/FAD-binding_dom"/>
</dbReference>
<dbReference type="InterPro" id="IPR012110">
    <property type="entry name" value="PDC/IPDC-like"/>
</dbReference>
<dbReference type="InterPro" id="IPR029061">
    <property type="entry name" value="THDP-binding"/>
</dbReference>
<dbReference type="InterPro" id="IPR012000">
    <property type="entry name" value="Thiamin_PyroP_enz_cen_dom"/>
</dbReference>
<dbReference type="InterPro" id="IPR012001">
    <property type="entry name" value="Thiamin_PyroP_enz_TPP-bd_dom"/>
</dbReference>
<dbReference type="InterPro" id="IPR011766">
    <property type="entry name" value="TPP_enzyme_TPP-bd"/>
</dbReference>
<dbReference type="InterPro" id="IPR047214">
    <property type="entry name" value="TPP_PDC_IPDC"/>
</dbReference>
<dbReference type="InterPro" id="IPR047213">
    <property type="entry name" value="TPP_PYR_PDC_IPDC-like"/>
</dbReference>
<dbReference type="PANTHER" id="PTHR43452">
    <property type="entry name" value="PYRUVATE DECARBOXYLASE"/>
    <property type="match status" value="1"/>
</dbReference>
<dbReference type="PANTHER" id="PTHR43452:SF30">
    <property type="entry name" value="PYRUVATE DECARBOXYLASE ISOZYME 1-RELATED"/>
    <property type="match status" value="1"/>
</dbReference>
<dbReference type="Pfam" id="PF02775">
    <property type="entry name" value="TPP_enzyme_C"/>
    <property type="match status" value="1"/>
</dbReference>
<dbReference type="Pfam" id="PF00205">
    <property type="entry name" value="TPP_enzyme_M"/>
    <property type="match status" value="1"/>
</dbReference>
<dbReference type="Pfam" id="PF02776">
    <property type="entry name" value="TPP_enzyme_N"/>
    <property type="match status" value="1"/>
</dbReference>
<dbReference type="PIRSF" id="PIRSF036565">
    <property type="entry name" value="Pyruvt_ip_decrb"/>
    <property type="match status" value="1"/>
</dbReference>
<dbReference type="SUPFAM" id="SSF52467">
    <property type="entry name" value="DHS-like NAD/FAD-binding domain"/>
    <property type="match status" value="1"/>
</dbReference>
<dbReference type="SUPFAM" id="SSF52518">
    <property type="entry name" value="Thiamin diphosphate-binding fold (THDP-binding)"/>
    <property type="match status" value="2"/>
</dbReference>